<comment type="function">
    <text evidence="1">Receptor for a number of inflammatory CC-chemokines including CCL3/MIP-1-alpha, CCL4/MIP-1-beta and RANTES and subsequently transduces a signal by increasing the intracellular calcium ion level. May play a role in the control of granulocytic lineage proliferation or differentiation. Participates in T-lymphocyte migration to the infection site by acting as a chemotactic receptor.</text>
</comment>
<comment type="subunit">
    <text evidence="1">Interacts with PRAF2. Efficient ligand binding to CCL3/MIP-1alpha and CCL4/MIP-1beta requires sulfation, O-glycosylation and sialic acid modifications. Glycosylation on Ser-6 is required for efficient binding of CCL4. Interacts with GRK2. Interacts with ARRB1 and ARRB2. Interacts with CNIH4. Interacts with S100A4; this interaction stimulates T-lymphocyte chemotaxis.</text>
</comment>
<comment type="subcellular location">
    <subcellularLocation>
        <location evidence="2">Cell membrane</location>
        <topology evidence="2">Multi-pass membrane protein</topology>
    </subcellularLocation>
</comment>
<comment type="PTM">
    <text evidence="1">Sulfated on at least 2 of the N-terminal tyrosines. Sulfation is required for efficient binding of the chemokines, CCL3 and CCL4 (By similarity).</text>
</comment>
<comment type="PTM">
    <text evidence="1">Palmitoylation in the C-terminal is important for cell surface expression.</text>
</comment>
<comment type="PTM">
    <text evidence="1">Phosphorylation on serine residues in the C-terminal is stimulated by binding CC chemokines especially by APO-RANTES.</text>
</comment>
<comment type="PTM">
    <text evidence="1">O-glycosylated, but not N-glycosylated. Ser-6 appears to be the major site even if Ser-7 may be also O-glycosylated. Also sialylated glycans present which contribute to chemokine binding. Thr-16 and Ser-17 may also be glycosylated and, if so, with small moieties such as a T-antigen.</text>
</comment>
<comment type="similarity">
    <text evidence="4">Belongs to the G-protein coupled receptor 1 family.</text>
</comment>
<proteinExistence type="inferred from homology"/>
<keyword id="KW-1003">Cell membrane</keyword>
<keyword id="KW-1015">Disulfide bond</keyword>
<keyword id="KW-0297">G-protein coupled receptor</keyword>
<keyword id="KW-0325">Glycoprotein</keyword>
<keyword id="KW-0449">Lipoprotein</keyword>
<keyword id="KW-0472">Membrane</keyword>
<keyword id="KW-0564">Palmitate</keyword>
<keyword id="KW-0597">Phosphoprotein</keyword>
<keyword id="KW-0675">Receptor</keyword>
<keyword id="KW-0765">Sulfation</keyword>
<keyword id="KW-0807">Transducer</keyword>
<keyword id="KW-0812">Transmembrane</keyword>
<keyword id="KW-1133">Transmembrane helix</keyword>
<accession>Q9TV47</accession>
<gene>
    <name type="primary">CCR5</name>
    <name type="synonym">CMKBR5</name>
</gene>
<protein>
    <recommendedName>
        <fullName>C-C chemokine receptor type 5</fullName>
        <shortName>C-C CKR-5</shortName>
        <shortName>CC-CKR-5</shortName>
        <shortName>CCR-5</shortName>
        <shortName>CCR5</shortName>
    </recommendedName>
    <cdAntigenName>CD195</cdAntigenName>
</protein>
<name>CCR5_CERCP</name>
<organism>
    <name type="scientific">Cercopithecus cephus</name>
    <name type="common">Moustached monkey</name>
    <dbReference type="NCBI Taxonomy" id="9535"/>
    <lineage>
        <taxon>Eukaryota</taxon>
        <taxon>Metazoa</taxon>
        <taxon>Chordata</taxon>
        <taxon>Craniata</taxon>
        <taxon>Vertebrata</taxon>
        <taxon>Euteleostomi</taxon>
        <taxon>Mammalia</taxon>
        <taxon>Eutheria</taxon>
        <taxon>Euarchontoglires</taxon>
        <taxon>Primates</taxon>
        <taxon>Haplorrhini</taxon>
        <taxon>Catarrhini</taxon>
        <taxon>Cercopithecidae</taxon>
        <taxon>Cercopithecinae</taxon>
        <taxon>Cercopithecus</taxon>
    </lineage>
</organism>
<dbReference type="EMBL" id="AF035217">
    <property type="protein sequence ID" value="AAD44010.1"/>
    <property type="molecule type" value="Genomic_DNA"/>
</dbReference>
<dbReference type="SMR" id="Q9TV47"/>
<dbReference type="GlyCosmos" id="Q9TV47">
    <property type="glycosylation" value="2 sites, No reported glycans"/>
</dbReference>
<dbReference type="GO" id="GO:0005737">
    <property type="term" value="C:cytoplasm"/>
    <property type="evidence" value="ECO:0007669"/>
    <property type="project" value="TreeGrafter"/>
</dbReference>
<dbReference type="GO" id="GO:0009897">
    <property type="term" value="C:external side of plasma membrane"/>
    <property type="evidence" value="ECO:0000250"/>
    <property type="project" value="UniProtKB"/>
</dbReference>
<dbReference type="GO" id="GO:0016493">
    <property type="term" value="F:C-C chemokine receptor activity"/>
    <property type="evidence" value="ECO:0000250"/>
    <property type="project" value="UniProtKB"/>
</dbReference>
<dbReference type="GO" id="GO:0071791">
    <property type="term" value="F:chemokine (C-C motif) ligand 5 binding"/>
    <property type="evidence" value="ECO:0007669"/>
    <property type="project" value="TreeGrafter"/>
</dbReference>
<dbReference type="GO" id="GO:0019722">
    <property type="term" value="P:calcium-mediated signaling"/>
    <property type="evidence" value="ECO:0007669"/>
    <property type="project" value="TreeGrafter"/>
</dbReference>
<dbReference type="GO" id="GO:0060326">
    <property type="term" value="P:cell chemotaxis"/>
    <property type="evidence" value="ECO:0007669"/>
    <property type="project" value="TreeGrafter"/>
</dbReference>
<dbReference type="GO" id="GO:0006955">
    <property type="term" value="P:immune response"/>
    <property type="evidence" value="ECO:0007669"/>
    <property type="project" value="InterPro"/>
</dbReference>
<dbReference type="GO" id="GO:0006954">
    <property type="term" value="P:inflammatory response"/>
    <property type="evidence" value="ECO:0007669"/>
    <property type="project" value="InterPro"/>
</dbReference>
<dbReference type="GO" id="GO:0007204">
    <property type="term" value="P:positive regulation of cytosolic calcium ion concentration"/>
    <property type="evidence" value="ECO:0007669"/>
    <property type="project" value="TreeGrafter"/>
</dbReference>
<dbReference type="CDD" id="cd15184">
    <property type="entry name" value="7tmA_CCR5_CCR2"/>
    <property type="match status" value="1"/>
</dbReference>
<dbReference type="FunFam" id="1.20.1070.10:FF:000026">
    <property type="entry name" value="C-C chemokine receptor type 5"/>
    <property type="match status" value="1"/>
</dbReference>
<dbReference type="Gene3D" id="1.20.1070.10">
    <property type="entry name" value="Rhodopsin 7-helix transmembrane proteins"/>
    <property type="match status" value="1"/>
</dbReference>
<dbReference type="InterPro" id="IPR050119">
    <property type="entry name" value="CCR1-9-like"/>
</dbReference>
<dbReference type="InterPro" id="IPR002240">
    <property type="entry name" value="Chemokine_CCR5"/>
</dbReference>
<dbReference type="InterPro" id="IPR000355">
    <property type="entry name" value="Chemokine_rcpt"/>
</dbReference>
<dbReference type="InterPro" id="IPR000276">
    <property type="entry name" value="GPCR_Rhodpsn"/>
</dbReference>
<dbReference type="InterPro" id="IPR017452">
    <property type="entry name" value="GPCR_Rhodpsn_7TM"/>
</dbReference>
<dbReference type="PANTHER" id="PTHR10489:SF686">
    <property type="entry name" value="C-C CHEMOKINE RECEPTOR TYPE 5"/>
    <property type="match status" value="1"/>
</dbReference>
<dbReference type="PANTHER" id="PTHR10489">
    <property type="entry name" value="CELL ADHESION MOLECULE"/>
    <property type="match status" value="1"/>
</dbReference>
<dbReference type="Pfam" id="PF00001">
    <property type="entry name" value="7tm_1"/>
    <property type="match status" value="1"/>
</dbReference>
<dbReference type="PRINTS" id="PR00657">
    <property type="entry name" value="CCCHEMOKINER"/>
</dbReference>
<dbReference type="PRINTS" id="PR01110">
    <property type="entry name" value="CHEMOKINER5"/>
</dbReference>
<dbReference type="PRINTS" id="PR00237">
    <property type="entry name" value="GPCRRHODOPSN"/>
</dbReference>
<dbReference type="SUPFAM" id="SSF81321">
    <property type="entry name" value="Family A G protein-coupled receptor-like"/>
    <property type="match status" value="1"/>
</dbReference>
<dbReference type="PROSITE" id="PS00237">
    <property type="entry name" value="G_PROTEIN_RECEP_F1_1"/>
    <property type="match status" value="1"/>
</dbReference>
<dbReference type="PROSITE" id="PS50262">
    <property type="entry name" value="G_PROTEIN_RECEP_F1_2"/>
    <property type="match status" value="1"/>
</dbReference>
<evidence type="ECO:0000250" key="1">
    <source>
        <dbReference type="UniProtKB" id="P51681"/>
    </source>
</evidence>
<evidence type="ECO:0000250" key="2">
    <source>
        <dbReference type="UniProtKB" id="Q9XT76"/>
    </source>
</evidence>
<evidence type="ECO:0000255" key="3"/>
<evidence type="ECO:0000255" key="4">
    <source>
        <dbReference type="PROSITE-ProRule" id="PRU00521"/>
    </source>
</evidence>
<sequence>MDYQVSSPTYDIDYNTSEPCQKINVKQIAARLLPLLYSLVFIFGFVGNILVVLILINCKRLKSMTDIYLLNLAISDLLFLLTVPFWAHYAAAQWDFGNTMCQLLTGLYFIGFFSGIFFIILLTIDRYLAIVHAVFALKARTVTFGVVTSVITWVVAVFASLPRIIFTRSQREGLHYTCSSHFPYSQYQFWKNFQTLKIVILGLVLPLLVMVICYSGILKTLLRCRNEKKRHRAVRLIFTIMIVYFLFWAPYNIVLLLNTFQEFFGLNNCSSSNRLDQAMQVTETLGMTHCCINPIIYAFVGEKFRNYLLVFFQKHIAKRFCKCCSIFQQEAPERASSVYTRSTGEQEISVGL</sequence>
<reference key="1">
    <citation type="journal article" date="1999" name="AIDS Res. Hum. Retroviruses">
        <title>Mutations in CCR5-coding sequences are not associated with SIV carrier status in African nonhuman primates.</title>
        <authorList>
            <person name="Mueller-Trutwin M.-C."/>
            <person name="Corbet S."/>
            <person name="Hansen J."/>
            <person name="Georges-Courbot M.-C."/>
            <person name="Diop O."/>
            <person name="Rigoulet J."/>
            <person name="Barre-Sinoussi F."/>
            <person name="Fomsgaard A."/>
        </authorList>
    </citation>
    <scope>NUCLEOTIDE SEQUENCE [GENOMIC DNA]</scope>
</reference>
<feature type="chain" id="PRO_0000256648" description="C-C chemokine receptor type 5">
    <location>
        <begin position="1"/>
        <end position="352"/>
    </location>
</feature>
<feature type="topological domain" description="Extracellular" evidence="3">
    <location>
        <begin position="1"/>
        <end position="30"/>
    </location>
</feature>
<feature type="transmembrane region" description="Helical; Name=1" evidence="3">
    <location>
        <begin position="31"/>
        <end position="58"/>
    </location>
</feature>
<feature type="topological domain" description="Cytoplasmic" evidence="3">
    <location>
        <begin position="59"/>
        <end position="68"/>
    </location>
</feature>
<feature type="transmembrane region" description="Helical; Name=2" evidence="3">
    <location>
        <begin position="69"/>
        <end position="89"/>
    </location>
</feature>
<feature type="topological domain" description="Extracellular" evidence="3">
    <location>
        <begin position="90"/>
        <end position="102"/>
    </location>
</feature>
<feature type="transmembrane region" description="Helical; Name=3" evidence="3">
    <location>
        <begin position="103"/>
        <end position="124"/>
    </location>
</feature>
<feature type="topological domain" description="Cytoplasmic" evidence="3">
    <location>
        <begin position="125"/>
        <end position="141"/>
    </location>
</feature>
<feature type="transmembrane region" description="Helical; Name=4" evidence="3">
    <location>
        <begin position="142"/>
        <end position="166"/>
    </location>
</feature>
<feature type="topological domain" description="Extracellular" evidence="3">
    <location>
        <begin position="167"/>
        <end position="198"/>
    </location>
</feature>
<feature type="transmembrane region" description="Helical; Name=5" evidence="3">
    <location>
        <begin position="199"/>
        <end position="218"/>
    </location>
</feature>
<feature type="topological domain" description="Cytoplasmic" evidence="3">
    <location>
        <begin position="219"/>
        <end position="235"/>
    </location>
</feature>
<feature type="transmembrane region" description="Helical; Name=6" evidence="3">
    <location>
        <begin position="236"/>
        <end position="260"/>
    </location>
</feature>
<feature type="topological domain" description="Extracellular" evidence="3">
    <location>
        <begin position="261"/>
        <end position="277"/>
    </location>
</feature>
<feature type="transmembrane region" description="Helical; Name=7" evidence="3">
    <location>
        <begin position="278"/>
        <end position="301"/>
    </location>
</feature>
<feature type="topological domain" description="Cytoplasmic" evidence="3">
    <location>
        <begin position="302"/>
        <end position="352"/>
    </location>
</feature>
<feature type="modified residue" description="Sulfotyrosine" evidence="1">
    <location>
        <position position="3"/>
    </location>
</feature>
<feature type="modified residue" description="Sulfotyrosine" evidence="3">
    <location>
        <position position="10"/>
    </location>
</feature>
<feature type="modified residue" description="Sulfotyrosine" evidence="3">
    <location>
        <position position="14"/>
    </location>
</feature>
<feature type="modified residue" description="Phosphoserine; by BARK1" evidence="1">
    <location>
        <position position="336"/>
    </location>
</feature>
<feature type="modified residue" description="Phosphoserine; by BARK1" evidence="1">
    <location>
        <position position="337"/>
    </location>
</feature>
<feature type="modified residue" description="Phosphoserine; by BARK1" evidence="1">
    <location>
        <position position="342"/>
    </location>
</feature>
<feature type="modified residue" description="Phosphoserine; by BARK1" evidence="1">
    <location>
        <position position="349"/>
    </location>
</feature>
<feature type="lipid moiety-binding region" description="S-palmitoyl cysteine" evidence="1">
    <location>
        <position position="321"/>
    </location>
</feature>
<feature type="lipid moiety-binding region" description="S-palmitoyl cysteine" evidence="1">
    <location>
        <position position="323"/>
    </location>
</feature>
<feature type="lipid moiety-binding region" description="S-palmitoyl cysteine" evidence="1">
    <location>
        <position position="324"/>
    </location>
</feature>
<feature type="glycosylation site" description="O-linked (GalNAc...) serine" evidence="1">
    <location>
        <position position="6"/>
    </location>
</feature>
<feature type="glycosylation site" description="O-linked (GalNAc...) serine" evidence="1">
    <location>
        <position position="7"/>
    </location>
</feature>
<feature type="disulfide bond" evidence="1">
    <location>
        <begin position="20"/>
        <end position="269"/>
    </location>
</feature>
<feature type="disulfide bond" evidence="4">
    <location>
        <begin position="101"/>
        <end position="178"/>
    </location>
</feature>